<dbReference type="EMBL" id="BC116062">
    <property type="protein sequence ID" value="AAI16063.1"/>
    <property type="molecule type" value="mRNA"/>
</dbReference>
<dbReference type="RefSeq" id="NP_001068745.1">
    <property type="nucleotide sequence ID" value="NM_001075277.1"/>
</dbReference>
<dbReference type="SMR" id="Q1LZD9"/>
<dbReference type="FunCoup" id="Q1LZD9">
    <property type="interactions" value="3632"/>
</dbReference>
<dbReference type="STRING" id="9913.ENSBTAP00000005134"/>
<dbReference type="PaxDb" id="9913-ENSBTAP00000005134"/>
<dbReference type="GeneID" id="506696"/>
<dbReference type="KEGG" id="bta:506696"/>
<dbReference type="CTD" id="55269"/>
<dbReference type="VEuPathDB" id="HostDB:ENSBTAG00000003934"/>
<dbReference type="eggNOG" id="KOG0115">
    <property type="taxonomic scope" value="Eukaryota"/>
</dbReference>
<dbReference type="HOGENOM" id="CLU_027185_2_1_1"/>
<dbReference type="InParanoid" id="Q1LZD9"/>
<dbReference type="OMA" id="EQDMRMG"/>
<dbReference type="OrthoDB" id="10067824at2759"/>
<dbReference type="TreeFam" id="TF315795"/>
<dbReference type="CD-CODE" id="D7FE2080">
    <property type="entry name" value="Nucleolus"/>
</dbReference>
<dbReference type="Proteomes" id="UP000009136">
    <property type="component" value="Chromosome 12"/>
</dbReference>
<dbReference type="Bgee" id="ENSBTAG00000003934">
    <property type="expression patterns" value="Expressed in spermatocyte and 107 other cell types or tissues"/>
</dbReference>
<dbReference type="GO" id="GO:0005737">
    <property type="term" value="C:cytoplasm"/>
    <property type="evidence" value="ECO:0007669"/>
    <property type="project" value="UniProtKB-SubCell"/>
</dbReference>
<dbReference type="GO" id="GO:0016363">
    <property type="term" value="C:nuclear matrix"/>
    <property type="evidence" value="ECO:0007669"/>
    <property type="project" value="UniProtKB-SubCell"/>
</dbReference>
<dbReference type="GO" id="GO:0016607">
    <property type="term" value="C:nuclear speck"/>
    <property type="evidence" value="ECO:0007669"/>
    <property type="project" value="UniProtKB-SubCell"/>
</dbReference>
<dbReference type="GO" id="GO:0005730">
    <property type="term" value="C:nucleolus"/>
    <property type="evidence" value="ECO:0007669"/>
    <property type="project" value="UniProtKB-SubCell"/>
</dbReference>
<dbReference type="GO" id="GO:0005634">
    <property type="term" value="C:nucleus"/>
    <property type="evidence" value="ECO:0000318"/>
    <property type="project" value="GO_Central"/>
</dbReference>
<dbReference type="GO" id="GO:0003723">
    <property type="term" value="F:RNA binding"/>
    <property type="evidence" value="ECO:0000318"/>
    <property type="project" value="GO_Central"/>
</dbReference>
<dbReference type="GO" id="GO:0045087">
    <property type="term" value="P:innate immune response"/>
    <property type="evidence" value="ECO:0007669"/>
    <property type="project" value="UniProtKB-KW"/>
</dbReference>
<dbReference type="GO" id="GO:0045892">
    <property type="term" value="P:negative regulation of DNA-templated transcription"/>
    <property type="evidence" value="ECO:0000250"/>
    <property type="project" value="UniProtKB"/>
</dbReference>
<dbReference type="GO" id="GO:0042752">
    <property type="term" value="P:regulation of circadian rhythm"/>
    <property type="evidence" value="ECO:0000250"/>
    <property type="project" value="UniProtKB"/>
</dbReference>
<dbReference type="GO" id="GO:0006355">
    <property type="term" value="P:regulation of DNA-templated transcription"/>
    <property type="evidence" value="ECO:0000318"/>
    <property type="project" value="GO_Central"/>
</dbReference>
<dbReference type="GO" id="GO:0048511">
    <property type="term" value="P:rhythmic process"/>
    <property type="evidence" value="ECO:0007669"/>
    <property type="project" value="UniProtKB-KW"/>
</dbReference>
<dbReference type="CDD" id="cd12949">
    <property type="entry name" value="NOPS_PSPC1"/>
    <property type="match status" value="1"/>
</dbReference>
<dbReference type="CDD" id="cd12586">
    <property type="entry name" value="RRM1_PSP1"/>
    <property type="match status" value="1"/>
</dbReference>
<dbReference type="FunFam" id="3.30.70.330:FF:000043">
    <property type="entry name" value="paraspeckle component 1 isoform X1"/>
    <property type="match status" value="1"/>
</dbReference>
<dbReference type="FunFam" id="3.30.70.330:FF:000126">
    <property type="entry name" value="paraspeckle component 1 isoform X1"/>
    <property type="match status" value="1"/>
</dbReference>
<dbReference type="Gene3D" id="3.30.70.330">
    <property type="match status" value="2"/>
</dbReference>
<dbReference type="Gene3D" id="6.10.250.1170">
    <property type="match status" value="1"/>
</dbReference>
<dbReference type="InterPro" id="IPR012975">
    <property type="entry name" value="NOPS"/>
</dbReference>
<dbReference type="InterPro" id="IPR012677">
    <property type="entry name" value="Nucleotide-bd_a/b_plait_sf"/>
</dbReference>
<dbReference type="InterPro" id="IPR034522">
    <property type="entry name" value="PSP1_RRM1"/>
</dbReference>
<dbReference type="InterPro" id="IPR035979">
    <property type="entry name" value="RBD_domain_sf"/>
</dbReference>
<dbReference type="InterPro" id="IPR000504">
    <property type="entry name" value="RRM_dom"/>
</dbReference>
<dbReference type="PANTHER" id="PTHR23189">
    <property type="entry name" value="RNA RECOGNITION MOTIF-CONTAINING"/>
    <property type="match status" value="1"/>
</dbReference>
<dbReference type="Pfam" id="PF08075">
    <property type="entry name" value="NOPS"/>
    <property type="match status" value="1"/>
</dbReference>
<dbReference type="Pfam" id="PF00076">
    <property type="entry name" value="RRM_1"/>
    <property type="match status" value="2"/>
</dbReference>
<dbReference type="SMART" id="SM00360">
    <property type="entry name" value="RRM"/>
    <property type="match status" value="2"/>
</dbReference>
<dbReference type="SUPFAM" id="SSF54928">
    <property type="entry name" value="RNA-binding domain, RBD"/>
    <property type="match status" value="1"/>
</dbReference>
<dbReference type="PROSITE" id="PS50102">
    <property type="entry name" value="RRM"/>
    <property type="match status" value="2"/>
</dbReference>
<evidence type="ECO:0000250" key="1">
    <source>
        <dbReference type="UniProtKB" id="Q8R326"/>
    </source>
</evidence>
<evidence type="ECO:0000250" key="2">
    <source>
        <dbReference type="UniProtKB" id="Q8WXF1"/>
    </source>
</evidence>
<evidence type="ECO:0000255" key="3"/>
<evidence type="ECO:0000255" key="4">
    <source>
        <dbReference type="PROSITE-ProRule" id="PRU00176"/>
    </source>
</evidence>
<evidence type="ECO:0000256" key="5">
    <source>
        <dbReference type="SAM" id="MobiDB-lite"/>
    </source>
</evidence>
<evidence type="ECO:0000305" key="6"/>
<feature type="chain" id="PRO_0000297539" description="Paraspeckle component 1">
    <location>
        <begin position="1"/>
        <end position="520"/>
    </location>
</feature>
<feature type="domain" description="RRM 1" evidence="4">
    <location>
        <begin position="79"/>
        <end position="151"/>
    </location>
</feature>
<feature type="domain" description="RRM 2" evidence="4">
    <location>
        <begin position="153"/>
        <end position="234"/>
    </location>
</feature>
<feature type="region of interest" description="Sufficient for paraspeckles localization" evidence="2">
    <location>
        <begin position="122"/>
        <end position="355"/>
    </location>
</feature>
<feature type="region of interest" description="Sufficient for perinucleolar caps localization and interaction with NONO" evidence="2">
    <location>
        <begin position="228"/>
        <end position="355"/>
    </location>
</feature>
<feature type="region of interest" description="Disordered" evidence="5">
    <location>
        <begin position="457"/>
        <end position="520"/>
    </location>
</feature>
<feature type="coiled-coil region" evidence="3">
    <location>
        <begin position="280"/>
        <end position="374"/>
    </location>
</feature>
<feature type="compositionally biased region" description="Polar residues" evidence="5">
    <location>
        <begin position="469"/>
        <end position="487"/>
    </location>
</feature>
<feature type="compositionally biased region" description="Gly residues" evidence="5">
    <location>
        <begin position="494"/>
        <end position="506"/>
    </location>
</feature>
<feature type="modified residue" description="N-acetylmethionine" evidence="2">
    <location>
        <position position="1"/>
    </location>
</feature>
<feature type="modified residue" description="Phosphoserine" evidence="2">
    <location>
        <position position="406"/>
    </location>
</feature>
<feature type="modified residue" description="Phosphoserine" evidence="2">
    <location>
        <position position="470"/>
    </location>
</feature>
<feature type="modified residue" description="Phosphoserine" evidence="2">
    <location>
        <position position="474"/>
    </location>
</feature>
<feature type="modified residue" description="Omega-N-methylarginine" evidence="2">
    <location>
        <position position="504"/>
    </location>
</feature>
<feature type="modified residue" description="Phosphoserine" evidence="2">
    <location>
        <position position="506"/>
    </location>
</feature>
<name>PSPC1_BOVIN</name>
<reference key="1">
    <citation type="submission" date="2006-05" db="EMBL/GenBank/DDBJ databases">
        <authorList>
            <consortium name="NIH - Mammalian Gene Collection (MGC) project"/>
        </authorList>
    </citation>
    <scope>NUCLEOTIDE SEQUENCE [LARGE SCALE MRNA]</scope>
    <source>
        <strain>Hereford</strain>
        <tissue>Ascending colon</tissue>
    </source>
</reference>
<gene>
    <name type="primary">PSPC1</name>
</gene>
<sequence>MMLRGNLKQVRIEKNPARLRALESAAGEGDPAALALALPGEPPVPAAPAGEDRPADEGGFTIDIKSFLKPGEKTYTQRCRLFVGNLPTDITEDDFKRLFERYGEPSEVFINRDRGFGFIRLESRTLAEIAKAELDGTILKSRPLRIRFATHGAALTVKNLSPVVSNELLEQAFSQFGPVEKAVVVVDDRGRATGKGFVEFAAKPPARKALERCGDGAFLLTTTPRPVIVEPMEQFDDEDGLPEKLMQKTQQYHKEREQPPRFAQPGTFEFEYASRWKALDEMEKQQREQVDRNIREAKEKLEAEMEAARHEHQLMLMRQDLMRRQEELRRLEELRNQELQKRKQIQLRHEEEHRRREEEMIRHREQEELRRQQEGFKPNYMENREQEMRMGDMGPRGAINMGDAFSPAPAGNQGPPAMMGMNMNNRGTIPGPPMGPGPAMGPEGAANMGTPMMPDNGAVHNDRFPQGPPSQMGSPMGSRTGSETPQAPMSGVGPVSGGPGGFGRGSQGANFEGPNKRRRY</sequence>
<accession>Q1LZD9</accession>
<organism>
    <name type="scientific">Bos taurus</name>
    <name type="common">Bovine</name>
    <dbReference type="NCBI Taxonomy" id="9913"/>
    <lineage>
        <taxon>Eukaryota</taxon>
        <taxon>Metazoa</taxon>
        <taxon>Chordata</taxon>
        <taxon>Craniata</taxon>
        <taxon>Vertebrata</taxon>
        <taxon>Euteleostomi</taxon>
        <taxon>Mammalia</taxon>
        <taxon>Eutheria</taxon>
        <taxon>Laurasiatheria</taxon>
        <taxon>Artiodactyla</taxon>
        <taxon>Ruminantia</taxon>
        <taxon>Pecora</taxon>
        <taxon>Bovidae</taxon>
        <taxon>Bovinae</taxon>
        <taxon>Bos</taxon>
    </lineage>
</organism>
<comment type="function">
    <text evidence="1 2">RNA-binding protein required for the formation of nuclear paraspeckles (By similarity). Binds to poly(A), poly(G) and poly(U) RNA homopolymers (By similarity). Regulates, cooperatively with NONO and SFPQ, androgen receptor-mediated gene transcription activity in Sertoli cell line (By similarity). Regulates the circadian clock by repressing the transcriptional activator activity of the CLOCK-BMAL1 heterodimer (By similarity). Plays a role in the regulation of DNA virus-mediated innate immune response by assembling into the HDP-RNP complex, a complex that serves as a platform for IRF3 phosphorylation and subsequent innate immune response activation through the cGAS-STING pathway (By similarity).</text>
</comment>
<comment type="subunit">
    <text evidence="1 2">Forms heterodimers with NONO; this involves formation of a coiled coil domain by helices from both proteins (By similarity). Found in a RNP complex with CAT2 transcribed nuclear RNA (CTN-RNA) (By similarity). Interaction with NONO is required for its targeting to paraspeckles and perinucleolar caps. Interacts with SFPQ. Part of the HDP-RNP complex composed of at least HEXIM1, PRKDC, XRCC5, XRCC6, paraspeckle proteins (SFPQ, NONO, PSPC1, RBM14, and MATR3) and NEAT1 RNA. Interacts with ALKBH5 (when acetylated); interaction with acetylated ALKBH5 facilitates recognition of N(6)-methyladenosine (m6A) RNAs (By similarity).</text>
</comment>
<comment type="subcellular location">
    <subcellularLocation>
        <location evidence="2">Nucleus speckle</location>
    </subcellularLocation>
    <subcellularLocation>
        <location evidence="2">Nucleus</location>
        <location evidence="2">Nucleolus</location>
    </subcellularLocation>
    <subcellularLocation>
        <location evidence="1">Nucleus matrix</location>
    </subcellularLocation>
    <subcellularLocation>
        <location evidence="1">Cytoplasm</location>
    </subcellularLocation>
    <text evidence="2">In punctate subnuclear structures often located adjacent to splicing speckles, called paraspeckles. Colocalizes with NONO and SFPQ in paraspeckles and perinucleolar caps in an RNA-dependent manner. May cycle between paraspeckles and nucleolus. In telophase, when daughter nuclei form, localizes to perinucleolar caps.</text>
</comment>
<comment type="similarity">
    <text evidence="6">Belongs to the PSPC family.</text>
</comment>
<keyword id="KW-0007">Acetylation</keyword>
<keyword id="KW-0010">Activator</keyword>
<keyword id="KW-0090">Biological rhythms</keyword>
<keyword id="KW-0175">Coiled coil</keyword>
<keyword id="KW-0963">Cytoplasm</keyword>
<keyword id="KW-0391">Immunity</keyword>
<keyword id="KW-0399">Innate immunity</keyword>
<keyword id="KW-0488">Methylation</keyword>
<keyword id="KW-0539">Nucleus</keyword>
<keyword id="KW-0597">Phosphoprotein</keyword>
<keyword id="KW-1185">Reference proteome</keyword>
<keyword id="KW-0677">Repeat</keyword>
<keyword id="KW-0678">Repressor</keyword>
<keyword id="KW-0694">RNA-binding</keyword>
<keyword id="KW-0804">Transcription</keyword>
<keyword id="KW-0805">Transcription regulation</keyword>
<proteinExistence type="evidence at transcript level"/>
<protein>
    <recommendedName>
        <fullName>Paraspeckle component 1</fullName>
    </recommendedName>
</protein>